<accession>Q6CKI1</accession>
<proteinExistence type="inferred from homology"/>
<dbReference type="EC" id="3.6.4.13"/>
<dbReference type="EMBL" id="CR382126">
    <property type="protein sequence ID" value="CAG98266.1"/>
    <property type="molecule type" value="Genomic_DNA"/>
</dbReference>
<dbReference type="RefSeq" id="XP_455558.1">
    <property type="nucleotide sequence ID" value="XM_455558.1"/>
</dbReference>
<dbReference type="SMR" id="Q6CKI1"/>
<dbReference type="FunCoup" id="Q6CKI1">
    <property type="interactions" value="1129"/>
</dbReference>
<dbReference type="STRING" id="284590.Q6CKI1"/>
<dbReference type="PaxDb" id="284590-Q6CKI1"/>
<dbReference type="KEGG" id="kla:KLLA0_F10505g"/>
<dbReference type="eggNOG" id="KOG0334">
    <property type="taxonomic scope" value="Eukaryota"/>
</dbReference>
<dbReference type="HOGENOM" id="CLU_003041_0_2_1"/>
<dbReference type="InParanoid" id="Q6CKI1"/>
<dbReference type="OMA" id="FAQYVHT"/>
<dbReference type="Proteomes" id="UP000000598">
    <property type="component" value="Chromosome F"/>
</dbReference>
<dbReference type="GO" id="GO:0005634">
    <property type="term" value="C:nucleus"/>
    <property type="evidence" value="ECO:0007669"/>
    <property type="project" value="UniProtKB-SubCell"/>
</dbReference>
<dbReference type="GO" id="GO:0005524">
    <property type="term" value="F:ATP binding"/>
    <property type="evidence" value="ECO:0007669"/>
    <property type="project" value="UniProtKB-KW"/>
</dbReference>
<dbReference type="GO" id="GO:0016887">
    <property type="term" value="F:ATP hydrolysis activity"/>
    <property type="evidence" value="ECO:0007669"/>
    <property type="project" value="RHEA"/>
</dbReference>
<dbReference type="GO" id="GO:0003676">
    <property type="term" value="F:nucleic acid binding"/>
    <property type="evidence" value="ECO:0007669"/>
    <property type="project" value="InterPro"/>
</dbReference>
<dbReference type="GO" id="GO:0003724">
    <property type="term" value="F:RNA helicase activity"/>
    <property type="evidence" value="ECO:0007669"/>
    <property type="project" value="UniProtKB-EC"/>
</dbReference>
<dbReference type="GO" id="GO:0006397">
    <property type="term" value="P:mRNA processing"/>
    <property type="evidence" value="ECO:0007669"/>
    <property type="project" value="UniProtKB-KW"/>
</dbReference>
<dbReference type="GO" id="GO:0008380">
    <property type="term" value="P:RNA splicing"/>
    <property type="evidence" value="ECO:0007669"/>
    <property type="project" value="UniProtKB-KW"/>
</dbReference>
<dbReference type="CDD" id="cd22474">
    <property type="entry name" value="KH-I_PRP5_like"/>
    <property type="match status" value="1"/>
</dbReference>
<dbReference type="CDD" id="cd18787">
    <property type="entry name" value="SF2_C_DEAD"/>
    <property type="match status" value="1"/>
</dbReference>
<dbReference type="Gene3D" id="3.40.50.300">
    <property type="entry name" value="P-loop containing nucleotide triphosphate hydrolases"/>
    <property type="match status" value="2"/>
</dbReference>
<dbReference type="InterPro" id="IPR011545">
    <property type="entry name" value="DEAD/DEAH_box_helicase_dom"/>
</dbReference>
<dbReference type="InterPro" id="IPR014001">
    <property type="entry name" value="Helicase_ATP-bd"/>
</dbReference>
<dbReference type="InterPro" id="IPR001650">
    <property type="entry name" value="Helicase_C-like"/>
</dbReference>
<dbReference type="InterPro" id="IPR027417">
    <property type="entry name" value="P-loop_NTPase"/>
</dbReference>
<dbReference type="InterPro" id="IPR056149">
    <property type="entry name" value="PRP5/DDX46/KHDC4_KH"/>
</dbReference>
<dbReference type="InterPro" id="IPR000629">
    <property type="entry name" value="RNA-helicase_DEAD-box_CS"/>
</dbReference>
<dbReference type="InterPro" id="IPR014014">
    <property type="entry name" value="RNA_helicase_DEAD_Q_motif"/>
</dbReference>
<dbReference type="PANTHER" id="PTHR47958">
    <property type="entry name" value="ATP-DEPENDENT RNA HELICASE DBP3"/>
    <property type="match status" value="1"/>
</dbReference>
<dbReference type="Pfam" id="PF00270">
    <property type="entry name" value="DEAD"/>
    <property type="match status" value="1"/>
</dbReference>
<dbReference type="Pfam" id="PF00271">
    <property type="entry name" value="Helicase_C"/>
    <property type="match status" value="1"/>
</dbReference>
<dbReference type="Pfam" id="PF23469">
    <property type="entry name" value="KH_12"/>
    <property type="match status" value="1"/>
</dbReference>
<dbReference type="SMART" id="SM00487">
    <property type="entry name" value="DEXDc"/>
    <property type="match status" value="1"/>
</dbReference>
<dbReference type="SMART" id="SM00490">
    <property type="entry name" value="HELICc"/>
    <property type="match status" value="1"/>
</dbReference>
<dbReference type="SUPFAM" id="SSF52540">
    <property type="entry name" value="P-loop containing nucleoside triphosphate hydrolases"/>
    <property type="match status" value="2"/>
</dbReference>
<dbReference type="PROSITE" id="PS00039">
    <property type="entry name" value="DEAD_ATP_HELICASE"/>
    <property type="match status" value="1"/>
</dbReference>
<dbReference type="PROSITE" id="PS51192">
    <property type="entry name" value="HELICASE_ATP_BIND_1"/>
    <property type="match status" value="1"/>
</dbReference>
<dbReference type="PROSITE" id="PS51194">
    <property type="entry name" value="HELICASE_CTER"/>
    <property type="match status" value="1"/>
</dbReference>
<dbReference type="PROSITE" id="PS51195">
    <property type="entry name" value="Q_MOTIF"/>
    <property type="match status" value="1"/>
</dbReference>
<protein>
    <recommendedName>
        <fullName>Pre-mRNA-processing ATP-dependent RNA helicase PRP5</fullName>
        <ecNumber>3.6.4.13</ecNumber>
    </recommendedName>
</protein>
<reference key="1">
    <citation type="journal article" date="2004" name="Nature">
        <title>Genome evolution in yeasts.</title>
        <authorList>
            <person name="Dujon B."/>
            <person name="Sherman D."/>
            <person name="Fischer G."/>
            <person name="Durrens P."/>
            <person name="Casaregola S."/>
            <person name="Lafontaine I."/>
            <person name="de Montigny J."/>
            <person name="Marck C."/>
            <person name="Neuveglise C."/>
            <person name="Talla E."/>
            <person name="Goffard N."/>
            <person name="Frangeul L."/>
            <person name="Aigle M."/>
            <person name="Anthouard V."/>
            <person name="Babour A."/>
            <person name="Barbe V."/>
            <person name="Barnay S."/>
            <person name="Blanchin S."/>
            <person name="Beckerich J.-M."/>
            <person name="Beyne E."/>
            <person name="Bleykasten C."/>
            <person name="Boisrame A."/>
            <person name="Boyer J."/>
            <person name="Cattolico L."/>
            <person name="Confanioleri F."/>
            <person name="de Daruvar A."/>
            <person name="Despons L."/>
            <person name="Fabre E."/>
            <person name="Fairhead C."/>
            <person name="Ferry-Dumazet H."/>
            <person name="Groppi A."/>
            <person name="Hantraye F."/>
            <person name="Hennequin C."/>
            <person name="Jauniaux N."/>
            <person name="Joyet P."/>
            <person name="Kachouri R."/>
            <person name="Kerrest A."/>
            <person name="Koszul R."/>
            <person name="Lemaire M."/>
            <person name="Lesur I."/>
            <person name="Ma L."/>
            <person name="Muller H."/>
            <person name="Nicaud J.-M."/>
            <person name="Nikolski M."/>
            <person name="Oztas S."/>
            <person name="Ozier-Kalogeropoulos O."/>
            <person name="Pellenz S."/>
            <person name="Potier S."/>
            <person name="Richard G.-F."/>
            <person name="Straub M.-L."/>
            <person name="Suleau A."/>
            <person name="Swennen D."/>
            <person name="Tekaia F."/>
            <person name="Wesolowski-Louvel M."/>
            <person name="Westhof E."/>
            <person name="Wirth B."/>
            <person name="Zeniou-Meyer M."/>
            <person name="Zivanovic Y."/>
            <person name="Bolotin-Fukuhara M."/>
            <person name="Thierry A."/>
            <person name="Bouchier C."/>
            <person name="Caudron B."/>
            <person name="Scarpelli C."/>
            <person name="Gaillardin C."/>
            <person name="Weissenbach J."/>
            <person name="Wincker P."/>
            <person name="Souciet J.-L."/>
        </authorList>
    </citation>
    <scope>NUCLEOTIDE SEQUENCE [LARGE SCALE GENOMIC DNA]</scope>
    <source>
        <strain>ATCC 8585 / CBS 2359 / DSM 70799 / NBRC 1267 / NRRL Y-1140 / WM37</strain>
    </source>
</reference>
<gene>
    <name type="primary">PRP5</name>
    <name type="ordered locus">KLLA0F10505g</name>
</gene>
<comment type="function">
    <text evidence="1">ATP-dependent RNA helicase involved spliceosome assembly and in nuclear splicing. Catalyzes an ATP-dependent conformational change of U2 snRNP. Bridges U1 and U2 snRNPs and enables stable U2 snRNP association with intron RNA (By similarity).</text>
</comment>
<comment type="catalytic activity">
    <reaction>
        <text>ATP + H2O = ADP + phosphate + H(+)</text>
        <dbReference type="Rhea" id="RHEA:13065"/>
        <dbReference type="ChEBI" id="CHEBI:15377"/>
        <dbReference type="ChEBI" id="CHEBI:15378"/>
        <dbReference type="ChEBI" id="CHEBI:30616"/>
        <dbReference type="ChEBI" id="CHEBI:43474"/>
        <dbReference type="ChEBI" id="CHEBI:456216"/>
        <dbReference type="EC" id="3.6.4.13"/>
    </reaction>
</comment>
<comment type="subcellular location">
    <subcellularLocation>
        <location evidence="1">Nucleus</location>
    </subcellularLocation>
</comment>
<comment type="domain">
    <text>The Q motif is unique to and characteristic of the DEAD box family of RNA helicases and controls ATP binding and hydrolysis.</text>
</comment>
<comment type="similarity">
    <text evidence="5">Belongs to the DEAD box helicase family. DDX46/PRP5 subfamily.</text>
</comment>
<evidence type="ECO:0000250" key="1"/>
<evidence type="ECO:0000255" key="2">
    <source>
        <dbReference type="PROSITE-ProRule" id="PRU00541"/>
    </source>
</evidence>
<evidence type="ECO:0000255" key="3">
    <source>
        <dbReference type="PROSITE-ProRule" id="PRU00542"/>
    </source>
</evidence>
<evidence type="ECO:0000256" key="4">
    <source>
        <dbReference type="SAM" id="MobiDB-lite"/>
    </source>
</evidence>
<evidence type="ECO:0000305" key="5"/>
<name>PRP5_KLULA</name>
<sequence>MDQTEKLRIRQEKLAKWKKQKLNNDVTASVSVDAKEERLKKLEAWKKKKKQQDELKQKDIKLTSIKSADRDRNKRRGQCSRKRPAFGGSDSESDDENSTSTLFKPRRNDTNTHVLTKDNSKDDLDDGNDALDEYIHKLIDKDSNTNRVRLIDNISEDEDANDSSSEKTISQEEAPVDSEILFKKKGRKKIKAIDYSKVLNLITLNKCLYREPNDLGLMSEKDVEELRLSLDNIKISGKDCPKPVTKWSQLGLSSEIMDLISNELQFVTLTPIQCQAIPAIMSGRDVIGISKTGSGKTVAFLLPLVRQIKAQPPLAPDETGPIGLILTPTRELAVQIQEEALKFCKGSGISSICCVGGSELKQQINELKRGVDIIVATPGRFIDLMTLNSGHLLSPTRISFVVMDEADRLFDLGFGPQVNQIMGCIRPDKQCVLFSATFPSKLKHFASRTLKNPIQITINSKSLINENIQQRVQIFDEEHVKFEFLLKRLSDRLALHRGEDEKTIIFVGSQQLCDLLYDELLLNGITTFPIHAGKPSAERLRNLQKFKETDNGILICTEVLSRGLNVPEVSLVIIYNAAKTIAQYVHTVGRTGRGTNNGVALSFVMVDELASAYILVKCMKENELSSVPMVVYQKLKEMNDEFSSGLKTGKYRLIQGFGGKGLDHLDELNEAKQSQEYTDYGVVENEEDVTEEESGATKMEYTRGKREEGHSTTYFAHININDLPQLARWEATKTETVSNIKQETGCNFESKGSFYPEGKGPKNDTDDPKLYLIVEGAEESDVTMALELLNTKVKEGIRKAAVKDIQSGKYRM</sequence>
<organism>
    <name type="scientific">Kluyveromyces lactis (strain ATCC 8585 / CBS 2359 / DSM 70799 / NBRC 1267 / NRRL Y-1140 / WM37)</name>
    <name type="common">Yeast</name>
    <name type="synonym">Candida sphaerica</name>
    <dbReference type="NCBI Taxonomy" id="284590"/>
    <lineage>
        <taxon>Eukaryota</taxon>
        <taxon>Fungi</taxon>
        <taxon>Dikarya</taxon>
        <taxon>Ascomycota</taxon>
        <taxon>Saccharomycotina</taxon>
        <taxon>Saccharomycetes</taxon>
        <taxon>Saccharomycetales</taxon>
        <taxon>Saccharomycetaceae</taxon>
        <taxon>Kluyveromyces</taxon>
    </lineage>
</organism>
<feature type="chain" id="PRO_0000232365" description="Pre-mRNA-processing ATP-dependent RNA helicase PRP5">
    <location>
        <begin position="1"/>
        <end position="812"/>
    </location>
</feature>
<feature type="domain" description="Helicase ATP-binding" evidence="2">
    <location>
        <begin position="277"/>
        <end position="456"/>
    </location>
</feature>
<feature type="domain" description="Helicase C-terminal" evidence="3">
    <location>
        <begin position="481"/>
        <end position="639"/>
    </location>
</feature>
<feature type="region of interest" description="Disordered" evidence="4">
    <location>
        <begin position="45"/>
        <end position="126"/>
    </location>
</feature>
<feature type="region of interest" description="Disordered" evidence="4">
    <location>
        <begin position="153"/>
        <end position="173"/>
    </location>
</feature>
<feature type="region of interest" description="Disordered" evidence="4">
    <location>
        <begin position="686"/>
        <end position="705"/>
    </location>
</feature>
<feature type="short sequence motif" description="Q motif">
    <location>
        <begin position="245"/>
        <end position="274"/>
    </location>
</feature>
<feature type="short sequence motif" description="DEAD box">
    <location>
        <begin position="404"/>
        <end position="407"/>
    </location>
</feature>
<feature type="compositionally biased region" description="Basic and acidic residues" evidence="4">
    <location>
        <begin position="45"/>
        <end position="72"/>
    </location>
</feature>
<feature type="compositionally biased region" description="Basic residues" evidence="4">
    <location>
        <begin position="73"/>
        <end position="84"/>
    </location>
</feature>
<feature type="compositionally biased region" description="Basic and acidic residues" evidence="4">
    <location>
        <begin position="106"/>
        <end position="122"/>
    </location>
</feature>
<feature type="binding site" evidence="2">
    <location>
        <begin position="290"/>
        <end position="297"/>
    </location>
    <ligand>
        <name>ATP</name>
        <dbReference type="ChEBI" id="CHEBI:30616"/>
    </ligand>
</feature>
<keyword id="KW-0067">ATP-binding</keyword>
<keyword id="KW-0347">Helicase</keyword>
<keyword id="KW-0378">Hydrolase</keyword>
<keyword id="KW-0507">mRNA processing</keyword>
<keyword id="KW-0508">mRNA splicing</keyword>
<keyword id="KW-0547">Nucleotide-binding</keyword>
<keyword id="KW-0539">Nucleus</keyword>
<keyword id="KW-1185">Reference proteome</keyword>